<reference key="1">
    <citation type="journal article" date="1998" name="DNA Res.">
        <title>Structural analysis of Arabidopsis thaliana chromosome 5. VIII. Sequence features of the regions of 1,081,958 bp covered by seventeen physically assigned P1 and TAC clones.</title>
        <authorList>
            <person name="Asamizu E."/>
            <person name="Sato S."/>
            <person name="Kaneko T."/>
            <person name="Nakamura Y."/>
            <person name="Kotani H."/>
            <person name="Miyajima N."/>
            <person name="Tabata S."/>
        </authorList>
    </citation>
    <scope>NUCLEOTIDE SEQUENCE [LARGE SCALE GENOMIC DNA]</scope>
    <source>
        <strain>cv. Columbia</strain>
    </source>
</reference>
<reference key="2">
    <citation type="journal article" date="2017" name="Plant J.">
        <title>Araport11: a complete reannotation of the Arabidopsis thaliana reference genome.</title>
        <authorList>
            <person name="Cheng C.Y."/>
            <person name="Krishnakumar V."/>
            <person name="Chan A.P."/>
            <person name="Thibaud-Nissen F."/>
            <person name="Schobel S."/>
            <person name="Town C.D."/>
        </authorList>
    </citation>
    <scope>GENOME REANNOTATION</scope>
    <source>
        <strain>cv. Columbia</strain>
    </source>
</reference>
<reference key="3">
    <citation type="submission" date="2007-06" db="EMBL/GenBank/DDBJ databases">
        <title>Arabidopsis ORF clones.</title>
        <authorList>
            <person name="Bautista-Mercan V.R."/>
            <person name="Kim C.J."/>
            <person name="Chen H."/>
            <person name="Quan R."/>
            <person name="De Los Reyes C."/>
            <person name="Ecker J.R."/>
        </authorList>
    </citation>
    <scope>NUCLEOTIDE SEQUENCE [LARGE SCALE MRNA]</scope>
    <source>
        <strain>cv. Columbia</strain>
    </source>
</reference>
<reference key="4">
    <citation type="journal article" date="2007" name="Phytochemistry">
        <title>Dirigent proteins in conifer defense II: Extended gene discovery, phylogeny, and constitutive and stress-induced gene expression in spruce (Picea spp.).</title>
        <authorList>
            <person name="Ralph S.G."/>
            <person name="Jancsik S."/>
            <person name="Bohlmann J."/>
        </authorList>
    </citation>
    <scope>GENE FAMILY</scope>
    <scope>NOMENCLATURE</scope>
</reference>
<name>DIR1_ARATH</name>
<dbReference type="EMBL" id="AB016888">
    <property type="protein sequence ID" value="BAB10492.1"/>
    <property type="molecule type" value="Genomic_DNA"/>
</dbReference>
<dbReference type="EMBL" id="CP002688">
    <property type="protein sequence ID" value="AED94819.1"/>
    <property type="molecule type" value="Genomic_DNA"/>
</dbReference>
<dbReference type="EMBL" id="BT030625">
    <property type="protein sequence ID" value="ABR46205.1"/>
    <property type="molecule type" value="mRNA"/>
</dbReference>
<dbReference type="RefSeq" id="NP_199066.1">
    <property type="nucleotide sequence ID" value="NM_123616.2"/>
</dbReference>
<dbReference type="SMR" id="Q9FIG6"/>
<dbReference type="FunCoup" id="Q9FIG6">
    <property type="interactions" value="190"/>
</dbReference>
<dbReference type="STRING" id="3702.Q9FIG6"/>
<dbReference type="GlyCosmos" id="Q9FIG6">
    <property type="glycosylation" value="1 site, No reported glycans"/>
</dbReference>
<dbReference type="GlyGen" id="Q9FIG6">
    <property type="glycosylation" value="1 site"/>
</dbReference>
<dbReference type="PaxDb" id="3702-AT5G42510.1"/>
<dbReference type="ProteomicsDB" id="224120"/>
<dbReference type="EnsemblPlants" id="AT5G42510.1">
    <property type="protein sequence ID" value="AT5G42510.1"/>
    <property type="gene ID" value="AT5G42510"/>
</dbReference>
<dbReference type="GeneID" id="834258"/>
<dbReference type="Gramene" id="AT5G42510.1">
    <property type="protein sequence ID" value="AT5G42510.1"/>
    <property type="gene ID" value="AT5G42510"/>
</dbReference>
<dbReference type="KEGG" id="ath:AT5G42510"/>
<dbReference type="Araport" id="AT5G42510"/>
<dbReference type="TAIR" id="AT5G42510"/>
<dbReference type="eggNOG" id="ENOG502RXST">
    <property type="taxonomic scope" value="Eukaryota"/>
</dbReference>
<dbReference type="HOGENOM" id="CLU_087111_2_0_1"/>
<dbReference type="InParanoid" id="Q9FIG6"/>
<dbReference type="OMA" id="APTTKFS"/>
<dbReference type="PhylomeDB" id="Q9FIG6"/>
<dbReference type="PRO" id="PR:Q9FIG6"/>
<dbReference type="Proteomes" id="UP000006548">
    <property type="component" value="Chromosome 5"/>
</dbReference>
<dbReference type="ExpressionAtlas" id="Q9FIG6">
    <property type="expression patterns" value="baseline and differential"/>
</dbReference>
<dbReference type="GO" id="GO:0048046">
    <property type="term" value="C:apoplast"/>
    <property type="evidence" value="ECO:0007669"/>
    <property type="project" value="UniProtKB-SubCell"/>
</dbReference>
<dbReference type="GO" id="GO:0009699">
    <property type="term" value="P:phenylpropanoid biosynthetic process"/>
    <property type="evidence" value="ECO:0007669"/>
    <property type="project" value="UniProtKB-ARBA"/>
</dbReference>
<dbReference type="Gene3D" id="2.40.480.10">
    <property type="entry name" value="Allene oxide cyclase-like"/>
    <property type="match status" value="1"/>
</dbReference>
<dbReference type="InterPro" id="IPR044859">
    <property type="entry name" value="Allene_oxi_cyc_Dirigent"/>
</dbReference>
<dbReference type="InterPro" id="IPR004265">
    <property type="entry name" value="Dirigent"/>
</dbReference>
<dbReference type="PANTHER" id="PTHR21495">
    <property type="entry name" value="NUCLEOPORIN-RELATED"/>
    <property type="match status" value="1"/>
</dbReference>
<dbReference type="Pfam" id="PF03018">
    <property type="entry name" value="Dirigent"/>
    <property type="match status" value="1"/>
</dbReference>
<comment type="function">
    <text evidence="1">Dirigent proteins impart stereoselectivity on the phenoxy radical-coupling reaction, yielding optically active lignans from two molecules of coniferyl alcohol in the biosynthesis of lignans, flavonolignans, and alkaloids and thus plays a central role in plant secondary metabolism.</text>
</comment>
<comment type="subunit">
    <text evidence="1">Homodimer.</text>
</comment>
<comment type="subcellular location">
    <subcellularLocation>
        <location evidence="1">Secreted</location>
        <location evidence="1">Extracellular space</location>
        <location evidence="1">Apoplast</location>
    </subcellularLocation>
</comment>
<comment type="similarity">
    <text evidence="3">Belongs to the plant dirigent protein family.</text>
</comment>
<gene>
    <name type="primary">DIR1</name>
    <name type="ordered locus">At5g42510</name>
    <name type="ORF">MDH9.21</name>
</gene>
<proteinExistence type="evidence at transcript level"/>
<organism>
    <name type="scientific">Arabidopsis thaliana</name>
    <name type="common">Mouse-ear cress</name>
    <dbReference type="NCBI Taxonomy" id="3702"/>
    <lineage>
        <taxon>Eukaryota</taxon>
        <taxon>Viridiplantae</taxon>
        <taxon>Streptophyta</taxon>
        <taxon>Embryophyta</taxon>
        <taxon>Tracheophyta</taxon>
        <taxon>Spermatophyta</taxon>
        <taxon>Magnoliopsida</taxon>
        <taxon>eudicotyledons</taxon>
        <taxon>Gunneridae</taxon>
        <taxon>Pentapetalae</taxon>
        <taxon>rosids</taxon>
        <taxon>malvids</taxon>
        <taxon>Brassicales</taxon>
        <taxon>Brassicaceae</taxon>
        <taxon>Camelineae</taxon>
        <taxon>Arabidopsis</taxon>
    </lineage>
</organism>
<feature type="signal peptide" evidence="2">
    <location>
        <begin position="1"/>
        <end position="24"/>
    </location>
</feature>
<feature type="chain" id="PRO_0000422832" description="Dirigent protein 1">
    <location>
        <begin position="25"/>
        <end position="182"/>
    </location>
</feature>
<feature type="glycosylation site" description="N-linked (GlcNAc...) asparagine" evidence="2">
    <location>
        <position position="125"/>
    </location>
</feature>
<keyword id="KW-0052">Apoplast</keyword>
<keyword id="KW-0325">Glycoprotein</keyword>
<keyword id="KW-1185">Reference proteome</keyword>
<keyword id="KW-0964">Secreted</keyword>
<keyword id="KW-0732">Signal</keyword>
<accession>Q9FIG6</accession>
<protein>
    <recommendedName>
        <fullName>Dirigent protein 1</fullName>
        <shortName>AtDIR1</shortName>
    </recommendedName>
</protein>
<evidence type="ECO:0000250" key="1"/>
<evidence type="ECO:0000255" key="2"/>
<evidence type="ECO:0000305" key="3"/>
<sequence length="182" mass="20131">MAKRFLLLLPLLSSILLLAVSVTAYSTTTPYQGYKPEKFTHLHFYFHDVISGDKPTAVKVAEARPTTTLNVKFGVIMIADDPLTEGPDPSSKEVGRAQGMYASTAMKDIVFTMVFNYVFTAGEFNGSTIAVYGRNDIFSKVRELPIIGGTGAFRFARGYALPKTYKIVGLDAVVEYNVFIWH</sequence>